<gene>
    <name type="ORF">LELG_00550</name>
</gene>
<evidence type="ECO:0000255" key="1">
    <source>
        <dbReference type="HAMAP-Rule" id="MF_03057"/>
    </source>
</evidence>
<protein>
    <recommendedName>
        <fullName evidence="1">Succinate dehydrogenase assembly factor 2, mitochondrial</fullName>
        <shortName evidence="1">SDH assembly factor 2</shortName>
        <shortName evidence="1">SDHAF2</shortName>
    </recommendedName>
</protein>
<sequence>MMSKNFRFSVRTFTNTTARLANYGKPQNPPIDPTLHMRISPIERTGETIDVKRARLVYQSRKRGILESDLLLSRFAKKYLKQMTMEELDEYDKLLDEADWDIYYWATKNYDTTPLPKKWEDSKILKLLQKEAENEERVILRMPELDEGDFINGGKETSLSEVKN</sequence>
<feature type="chain" id="PRO_0000383194" description="Succinate dehydrogenase assembly factor 2, mitochondrial">
    <location>
        <begin position="1"/>
        <end position="164"/>
    </location>
</feature>
<name>SDHF2_LODEL</name>
<reference key="1">
    <citation type="journal article" date="2009" name="Nature">
        <title>Evolution of pathogenicity and sexual reproduction in eight Candida genomes.</title>
        <authorList>
            <person name="Butler G."/>
            <person name="Rasmussen M.D."/>
            <person name="Lin M.F."/>
            <person name="Santos M.A.S."/>
            <person name="Sakthikumar S."/>
            <person name="Munro C.A."/>
            <person name="Rheinbay E."/>
            <person name="Grabherr M."/>
            <person name="Forche A."/>
            <person name="Reedy J.L."/>
            <person name="Agrafioti I."/>
            <person name="Arnaud M.B."/>
            <person name="Bates S."/>
            <person name="Brown A.J.P."/>
            <person name="Brunke S."/>
            <person name="Costanzo M.C."/>
            <person name="Fitzpatrick D.A."/>
            <person name="de Groot P.W.J."/>
            <person name="Harris D."/>
            <person name="Hoyer L.L."/>
            <person name="Hube B."/>
            <person name="Klis F.M."/>
            <person name="Kodira C."/>
            <person name="Lennard N."/>
            <person name="Logue M.E."/>
            <person name="Martin R."/>
            <person name="Neiman A.M."/>
            <person name="Nikolaou E."/>
            <person name="Quail M.A."/>
            <person name="Quinn J."/>
            <person name="Santos M.C."/>
            <person name="Schmitzberger F.F."/>
            <person name="Sherlock G."/>
            <person name="Shah P."/>
            <person name="Silverstein K.A.T."/>
            <person name="Skrzypek M.S."/>
            <person name="Soll D."/>
            <person name="Staggs R."/>
            <person name="Stansfield I."/>
            <person name="Stumpf M.P.H."/>
            <person name="Sudbery P.E."/>
            <person name="Srikantha T."/>
            <person name="Zeng Q."/>
            <person name="Berman J."/>
            <person name="Berriman M."/>
            <person name="Heitman J."/>
            <person name="Gow N.A.R."/>
            <person name="Lorenz M.C."/>
            <person name="Birren B.W."/>
            <person name="Kellis M."/>
            <person name="Cuomo C.A."/>
        </authorList>
    </citation>
    <scope>NUCLEOTIDE SEQUENCE [LARGE SCALE GENOMIC DNA]</scope>
    <source>
        <strain>ATCC 11503 / BCRC 21390 / CBS 2605 / JCM 1781 / NBRC 1676 / NRRL YB-4239</strain>
    </source>
</reference>
<organism>
    <name type="scientific">Lodderomyces elongisporus (strain ATCC 11503 / CBS 2605 / JCM 1781 / NBRC 1676 / NRRL YB-4239)</name>
    <name type="common">Yeast</name>
    <name type="synonym">Saccharomyces elongisporus</name>
    <dbReference type="NCBI Taxonomy" id="379508"/>
    <lineage>
        <taxon>Eukaryota</taxon>
        <taxon>Fungi</taxon>
        <taxon>Dikarya</taxon>
        <taxon>Ascomycota</taxon>
        <taxon>Saccharomycotina</taxon>
        <taxon>Pichiomycetes</taxon>
        <taxon>Debaryomycetaceae</taxon>
        <taxon>Candida/Lodderomyces clade</taxon>
        <taxon>Lodderomyces</taxon>
    </lineage>
</organism>
<proteinExistence type="inferred from homology"/>
<dbReference type="EMBL" id="CH981524">
    <property type="protein sequence ID" value="EDK42372.1"/>
    <property type="molecule type" value="Genomic_DNA"/>
</dbReference>
<dbReference type="RefSeq" id="XP_001528030.1">
    <property type="nucleotide sequence ID" value="XM_001527980.1"/>
</dbReference>
<dbReference type="SMR" id="A5DT64"/>
<dbReference type="FunCoup" id="A5DT64">
    <property type="interactions" value="299"/>
</dbReference>
<dbReference type="STRING" id="379508.A5DT64"/>
<dbReference type="GeneID" id="5235342"/>
<dbReference type="KEGG" id="lel:PVL30_000535"/>
<dbReference type="VEuPathDB" id="FungiDB:LELG_00550"/>
<dbReference type="eggNOG" id="KOG3326">
    <property type="taxonomic scope" value="Eukaryota"/>
</dbReference>
<dbReference type="HOGENOM" id="CLU_103054_0_1_1"/>
<dbReference type="InParanoid" id="A5DT64"/>
<dbReference type="OMA" id="YGKPQNP"/>
<dbReference type="OrthoDB" id="284292at2759"/>
<dbReference type="Proteomes" id="UP000001996">
    <property type="component" value="Unassembled WGS sequence"/>
</dbReference>
<dbReference type="GO" id="GO:0005759">
    <property type="term" value="C:mitochondrial matrix"/>
    <property type="evidence" value="ECO:0000250"/>
    <property type="project" value="UniProtKB"/>
</dbReference>
<dbReference type="GO" id="GO:0006121">
    <property type="term" value="P:mitochondrial electron transport, succinate to ubiquinone"/>
    <property type="evidence" value="ECO:0000250"/>
    <property type="project" value="UniProtKB"/>
</dbReference>
<dbReference type="GO" id="GO:0034553">
    <property type="term" value="P:mitochondrial respiratory chain complex II assembly"/>
    <property type="evidence" value="ECO:0007669"/>
    <property type="project" value="TreeGrafter"/>
</dbReference>
<dbReference type="GO" id="GO:0018293">
    <property type="term" value="P:protein-FAD linkage"/>
    <property type="evidence" value="ECO:0000250"/>
    <property type="project" value="UniProtKB"/>
</dbReference>
<dbReference type="GO" id="GO:0006099">
    <property type="term" value="P:tricarboxylic acid cycle"/>
    <property type="evidence" value="ECO:0007669"/>
    <property type="project" value="TreeGrafter"/>
</dbReference>
<dbReference type="FunFam" id="1.10.150.250:FF:000002">
    <property type="entry name" value="Succinate dehydrogenase assembly factor 2, mitochondrial"/>
    <property type="match status" value="1"/>
</dbReference>
<dbReference type="Gene3D" id="1.10.150.250">
    <property type="entry name" value="Flavinator of succinate dehydrogenase"/>
    <property type="match status" value="1"/>
</dbReference>
<dbReference type="HAMAP" id="MF_03057">
    <property type="entry name" value="SDHAF2"/>
    <property type="match status" value="1"/>
</dbReference>
<dbReference type="InterPro" id="IPR005631">
    <property type="entry name" value="SDH"/>
</dbReference>
<dbReference type="InterPro" id="IPR036714">
    <property type="entry name" value="SDH_sf"/>
</dbReference>
<dbReference type="InterPro" id="IPR028882">
    <property type="entry name" value="SDHAF2"/>
</dbReference>
<dbReference type="PANTHER" id="PTHR12469">
    <property type="entry name" value="PROTEIN EMI5 HOMOLOG, MITOCHONDRIAL"/>
    <property type="match status" value="1"/>
</dbReference>
<dbReference type="PANTHER" id="PTHR12469:SF2">
    <property type="entry name" value="SUCCINATE DEHYDROGENASE ASSEMBLY FACTOR 2, MITOCHONDRIAL"/>
    <property type="match status" value="1"/>
</dbReference>
<dbReference type="Pfam" id="PF03937">
    <property type="entry name" value="Sdh5"/>
    <property type="match status" value="1"/>
</dbReference>
<dbReference type="SUPFAM" id="SSF109910">
    <property type="entry name" value="YgfY-like"/>
    <property type="match status" value="1"/>
</dbReference>
<accession>A5DT64</accession>
<comment type="function">
    <text evidence="1">Plays an essential role in the assembly of succinate dehydrogenase (SDH), an enzyme complex (also referred to as respiratory complex II) that is a component of both the tricarboxylic acid (TCA) cycle and the mitochondrial electron transport chain, and which couples the oxidation of succinate to fumarate with the reduction of ubiquinone (coenzyme Q) to ubiquinol. Required for flavinylation (covalent attachment of FAD) of the flavoprotein subunit of the SDH catalytic dimer.</text>
</comment>
<comment type="subunit">
    <text evidence="1">Interacts with the flavoprotein subunit within the SDH catalytic dimer.</text>
</comment>
<comment type="subcellular location">
    <subcellularLocation>
        <location evidence="1">Mitochondrion matrix</location>
    </subcellularLocation>
</comment>
<comment type="miscellaneous">
    <text evidence="1">This protein may be expected to contain an N-terminal transit peptide but none has been predicted.</text>
</comment>
<comment type="similarity">
    <text evidence="1">Belongs to the SDHAF2 family.</text>
</comment>
<keyword id="KW-0143">Chaperone</keyword>
<keyword id="KW-0496">Mitochondrion</keyword>
<keyword id="KW-1185">Reference proteome</keyword>